<proteinExistence type="inferred from homology"/>
<keyword id="KW-0150">Chloroplast</keyword>
<keyword id="KW-0934">Plastid</keyword>
<keyword id="KW-0687">Ribonucleoprotein</keyword>
<keyword id="KW-0689">Ribosomal protein</keyword>
<keyword id="KW-0694">RNA-binding</keyword>
<keyword id="KW-0699">rRNA-binding</keyword>
<geneLocation type="chloroplast"/>
<protein>
    <recommendedName>
        <fullName evidence="2">Small ribosomal subunit protein uS7c</fullName>
    </recommendedName>
    <alternativeName>
        <fullName>30S ribosomal protein S7, chloroplastic</fullName>
    </alternativeName>
</protein>
<sequence length="156" mass="17698">MSRRRRAKKRIICPDSIYDSRLINMLVNRVMKDGKKSLAYKIVYQTMDQIAEKTEQDPIQILEEAVRNTKPLVEVKARRVGGSAYQVPLEVNPERGTVLALQWVLAAARNRSGRSAIAKLTNELIDASKKTGGAIKKRDDVHRMAEANKAFAKFRF</sequence>
<dbReference type="EMBL" id="AY835431">
    <property type="protein sequence ID" value="AAV80643.1"/>
    <property type="molecule type" value="Genomic_DNA"/>
</dbReference>
<dbReference type="RefSeq" id="YP_636219.1">
    <property type="nucleotide sequence ID" value="NC_008114.1"/>
</dbReference>
<dbReference type="SMR" id="Q3ZJ48"/>
<dbReference type="GeneID" id="4108730"/>
<dbReference type="GO" id="GO:0009507">
    <property type="term" value="C:chloroplast"/>
    <property type="evidence" value="ECO:0007669"/>
    <property type="project" value="UniProtKB-SubCell"/>
</dbReference>
<dbReference type="GO" id="GO:0015935">
    <property type="term" value="C:small ribosomal subunit"/>
    <property type="evidence" value="ECO:0007669"/>
    <property type="project" value="InterPro"/>
</dbReference>
<dbReference type="GO" id="GO:0019843">
    <property type="term" value="F:rRNA binding"/>
    <property type="evidence" value="ECO:0007669"/>
    <property type="project" value="UniProtKB-UniRule"/>
</dbReference>
<dbReference type="GO" id="GO:0003735">
    <property type="term" value="F:structural constituent of ribosome"/>
    <property type="evidence" value="ECO:0007669"/>
    <property type="project" value="InterPro"/>
</dbReference>
<dbReference type="GO" id="GO:0006412">
    <property type="term" value="P:translation"/>
    <property type="evidence" value="ECO:0007669"/>
    <property type="project" value="UniProtKB-UniRule"/>
</dbReference>
<dbReference type="CDD" id="cd14871">
    <property type="entry name" value="uS7_Chloroplast"/>
    <property type="match status" value="1"/>
</dbReference>
<dbReference type="FunFam" id="1.10.455.10:FF:000001">
    <property type="entry name" value="30S ribosomal protein S7"/>
    <property type="match status" value="1"/>
</dbReference>
<dbReference type="Gene3D" id="1.10.455.10">
    <property type="entry name" value="Ribosomal protein S7 domain"/>
    <property type="match status" value="1"/>
</dbReference>
<dbReference type="HAMAP" id="MF_00480_B">
    <property type="entry name" value="Ribosomal_uS7_B"/>
    <property type="match status" value="1"/>
</dbReference>
<dbReference type="InterPro" id="IPR000235">
    <property type="entry name" value="Ribosomal_uS7"/>
</dbReference>
<dbReference type="InterPro" id="IPR005717">
    <property type="entry name" value="Ribosomal_uS7_bac/org-type"/>
</dbReference>
<dbReference type="InterPro" id="IPR020606">
    <property type="entry name" value="Ribosomal_uS7_CS"/>
</dbReference>
<dbReference type="InterPro" id="IPR023798">
    <property type="entry name" value="Ribosomal_uS7_dom"/>
</dbReference>
<dbReference type="InterPro" id="IPR036823">
    <property type="entry name" value="Ribosomal_uS7_dom_sf"/>
</dbReference>
<dbReference type="NCBIfam" id="TIGR01029">
    <property type="entry name" value="rpsG_bact"/>
    <property type="match status" value="1"/>
</dbReference>
<dbReference type="PANTHER" id="PTHR11205">
    <property type="entry name" value="RIBOSOMAL PROTEIN S7"/>
    <property type="match status" value="1"/>
</dbReference>
<dbReference type="Pfam" id="PF00177">
    <property type="entry name" value="Ribosomal_S7"/>
    <property type="match status" value="1"/>
</dbReference>
<dbReference type="PIRSF" id="PIRSF002122">
    <property type="entry name" value="RPS7p_RPS7a_RPS5e_RPS7o"/>
    <property type="match status" value="1"/>
</dbReference>
<dbReference type="SUPFAM" id="SSF47973">
    <property type="entry name" value="Ribosomal protein S7"/>
    <property type="match status" value="1"/>
</dbReference>
<dbReference type="PROSITE" id="PS00052">
    <property type="entry name" value="RIBOSOMAL_S7"/>
    <property type="match status" value="1"/>
</dbReference>
<accession>Q3ZJ48</accession>
<reference key="1">
    <citation type="journal article" date="2005" name="Mol. Biol. Evol.">
        <title>The chloroplast genome sequence of the green alga Pseudendoclonium akinetum (Ulvophyceae) reveals unusual structural features and new insights into the branching order of chlorophyte lineages.</title>
        <authorList>
            <person name="Pombert J.-F."/>
            <person name="Otis C."/>
            <person name="Lemieux C."/>
            <person name="Turmel M."/>
        </authorList>
    </citation>
    <scope>NUCLEOTIDE SEQUENCE [LARGE SCALE GENOMIC DNA]</scope>
    <source>
        <strain>UTEX 1912</strain>
    </source>
</reference>
<evidence type="ECO:0000250" key="1"/>
<evidence type="ECO:0000305" key="2"/>
<feature type="chain" id="PRO_0000277054" description="Small ribosomal subunit protein uS7c">
    <location>
        <begin position="1"/>
        <end position="156"/>
    </location>
</feature>
<gene>
    <name type="primary">rps7</name>
</gene>
<name>RR7_TUPAK</name>
<organism>
    <name type="scientific">Tupiella akineta</name>
    <name type="common">Green alga</name>
    <name type="synonym">Pseudendoclonium akinetum</name>
    <dbReference type="NCBI Taxonomy" id="160070"/>
    <lineage>
        <taxon>Eukaryota</taxon>
        <taxon>Viridiplantae</taxon>
        <taxon>Chlorophyta</taxon>
        <taxon>Ulvophyceae</taxon>
        <taxon>OUU clade</taxon>
        <taxon>Ulotrichales</taxon>
        <taxon>Tupiellaceae</taxon>
        <taxon>Tupiella</taxon>
    </lineage>
</organism>
<comment type="function">
    <text evidence="1">One of the primary rRNA binding proteins, it binds directly to 16S rRNA where it nucleates assembly of the head domain of the 30S subunit.</text>
</comment>
<comment type="subunit">
    <text>Part of the 30S ribosomal subunit.</text>
</comment>
<comment type="subcellular location">
    <subcellularLocation>
        <location>Plastid</location>
        <location>Chloroplast</location>
    </subcellularLocation>
</comment>
<comment type="similarity">
    <text evidence="2">Belongs to the universal ribosomal protein uS7 family.</text>
</comment>